<comment type="function">
    <text evidence="2">A humoral factor that may play a role in stress tolerance.</text>
</comment>
<comment type="subcellular location">
    <subcellularLocation>
        <location evidence="2 3">Secreted</location>
    </subcellularLocation>
</comment>
<comment type="developmental stage">
    <text evidence="2">Expressed in the early pupae.</text>
</comment>
<comment type="induction">
    <text evidence="2">By a variety of stressful conditions such as bacterial infection, heat shock, paraquat feeding and exposure to ultraviolet light.</text>
</comment>
<comment type="similarity">
    <text evidence="1">Belongs to the Turandot family.</text>
</comment>
<accession>Q8IN42</accession>
<accession>Q962D5</accession>
<dbReference type="EMBL" id="AY035994">
    <property type="protein sequence ID" value="AAK64527.1"/>
    <property type="molecule type" value="mRNA"/>
</dbReference>
<dbReference type="EMBL" id="AE014297">
    <property type="protein sequence ID" value="AAN13842.1"/>
    <property type="molecule type" value="Genomic_DNA"/>
</dbReference>
<dbReference type="RefSeq" id="NP_536782.2">
    <property type="nucleotide sequence ID" value="NM_080521.3"/>
</dbReference>
<dbReference type="FunCoup" id="Q8IN42">
    <property type="interactions" value="16"/>
</dbReference>
<dbReference type="STRING" id="7227.FBpp0083381"/>
<dbReference type="PaxDb" id="7227-FBpp0083381"/>
<dbReference type="DNASU" id="117459"/>
<dbReference type="EnsemblMetazoa" id="FBtr0083974">
    <property type="protein sequence ID" value="FBpp0083381"/>
    <property type="gene ID" value="FBgn0044809"/>
</dbReference>
<dbReference type="GeneID" id="117459"/>
<dbReference type="KEGG" id="dme:Dmel_CG31507"/>
<dbReference type="UCSC" id="CG31507-RA">
    <property type="organism name" value="d. melanogaster"/>
</dbReference>
<dbReference type="AGR" id="FB:FBgn0044809"/>
<dbReference type="CTD" id="117459"/>
<dbReference type="FlyBase" id="FBgn0044809">
    <property type="gene designation" value="TotZ"/>
</dbReference>
<dbReference type="VEuPathDB" id="VectorBase:FBgn0044809"/>
<dbReference type="GeneTree" id="ENSGT00940000176310"/>
<dbReference type="HOGENOM" id="CLU_1760725_0_0_1"/>
<dbReference type="InParanoid" id="Q8IN42"/>
<dbReference type="OMA" id="GFWSCIS"/>
<dbReference type="OrthoDB" id="7843604at2759"/>
<dbReference type="PhylomeDB" id="Q8IN42"/>
<dbReference type="BioGRID-ORCS" id="117459">
    <property type="hits" value="0 hits in 1 CRISPR screen"/>
</dbReference>
<dbReference type="GenomeRNAi" id="117459"/>
<dbReference type="PRO" id="PR:Q8IN42"/>
<dbReference type="Proteomes" id="UP000000803">
    <property type="component" value="Chromosome 3R"/>
</dbReference>
<dbReference type="Bgee" id="FBgn0044809">
    <property type="expression patterns" value="Expressed in pupa and 1 other cell type or tissue"/>
</dbReference>
<dbReference type="ExpressionAtlas" id="Q8IN42">
    <property type="expression patterns" value="baseline and differential"/>
</dbReference>
<dbReference type="GO" id="GO:0005576">
    <property type="term" value="C:extracellular region"/>
    <property type="evidence" value="ECO:0000255"/>
    <property type="project" value="FlyBase"/>
</dbReference>
<dbReference type="GO" id="GO:0005615">
    <property type="term" value="C:extracellular space"/>
    <property type="evidence" value="ECO:0000314"/>
    <property type="project" value="UniProtKB"/>
</dbReference>
<dbReference type="GO" id="GO:0034605">
    <property type="term" value="P:cellular response to heat"/>
    <property type="evidence" value="ECO:0000270"/>
    <property type="project" value="FlyBase"/>
</dbReference>
<dbReference type="GO" id="GO:0034599">
    <property type="term" value="P:cellular response to oxidative stress"/>
    <property type="evidence" value="ECO:0000270"/>
    <property type="project" value="FlyBase"/>
</dbReference>
<dbReference type="GO" id="GO:0034644">
    <property type="term" value="P:cellular response to UV"/>
    <property type="evidence" value="ECO:0000270"/>
    <property type="project" value="FlyBase"/>
</dbReference>
<dbReference type="GO" id="GO:0045087">
    <property type="term" value="P:innate immune response"/>
    <property type="evidence" value="ECO:0007669"/>
    <property type="project" value="UniProtKB-KW"/>
</dbReference>
<dbReference type="GO" id="GO:0009617">
    <property type="term" value="P:response to bacterium"/>
    <property type="evidence" value="ECO:0000270"/>
    <property type="project" value="FlyBase"/>
</dbReference>
<dbReference type="GO" id="GO:0009408">
    <property type="term" value="P:response to heat"/>
    <property type="evidence" value="ECO:0000314"/>
    <property type="project" value="UniProtKB"/>
</dbReference>
<dbReference type="GO" id="GO:0006979">
    <property type="term" value="P:response to oxidative stress"/>
    <property type="evidence" value="ECO:0000314"/>
    <property type="project" value="UniProtKB"/>
</dbReference>
<dbReference type="GO" id="GO:0009411">
    <property type="term" value="P:response to UV"/>
    <property type="evidence" value="ECO:0000314"/>
    <property type="project" value="UniProtKB"/>
</dbReference>
<dbReference type="InterPro" id="IPR010825">
    <property type="entry name" value="Turandot"/>
</dbReference>
<dbReference type="Pfam" id="PF07240">
    <property type="entry name" value="Turandot"/>
    <property type="match status" value="1"/>
</dbReference>
<keyword id="KW-0391">Immunity</keyword>
<keyword id="KW-0399">Innate immunity</keyword>
<keyword id="KW-1185">Reference proteome</keyword>
<keyword id="KW-0964">Secreted</keyword>
<keyword id="KW-0732">Signal</keyword>
<sequence length="147" mass="16179">MYFAIRLSFVLAVLICLTGNGSARMLDADRNRLQQLQIRSQQSADANTQVDIAYEVIGIYDKYKGQGGSNVLREAQLNSQVNDFKRKTMVIDGVPAQGGVWGILGAIKKAADAVPDNVKKDAENLVKSSTKVLVRGIYDYLMGKMKH</sequence>
<organism>
    <name type="scientific">Drosophila melanogaster</name>
    <name type="common">Fruit fly</name>
    <dbReference type="NCBI Taxonomy" id="7227"/>
    <lineage>
        <taxon>Eukaryota</taxon>
        <taxon>Metazoa</taxon>
        <taxon>Ecdysozoa</taxon>
        <taxon>Arthropoda</taxon>
        <taxon>Hexapoda</taxon>
        <taxon>Insecta</taxon>
        <taxon>Pterygota</taxon>
        <taxon>Neoptera</taxon>
        <taxon>Endopterygota</taxon>
        <taxon>Diptera</taxon>
        <taxon>Brachycera</taxon>
        <taxon>Muscomorpha</taxon>
        <taxon>Ephydroidea</taxon>
        <taxon>Drosophilidae</taxon>
        <taxon>Drosophila</taxon>
        <taxon>Sophophora</taxon>
    </lineage>
</organism>
<reference evidence="3 4" key="1">
    <citation type="journal article" date="2001" name="Biochem. Biophys. Res. Commun.">
        <title>A family of Turandot-related genes in the humoral stress response of Drosophila.</title>
        <authorList>
            <person name="Ekengren S."/>
            <person name="Hultmark D."/>
        </authorList>
    </citation>
    <scope>NUCLEOTIDE SEQUENCE [MRNA]</scope>
    <scope>POSSIBLE FUNCTION</scope>
    <scope>DEVELOPMENTAL STAGE</scope>
    <scope>INDUCTION</scope>
    <source>
        <strain evidence="4">Canton-S</strain>
        <tissue evidence="2">Pupae</tissue>
    </source>
</reference>
<reference evidence="5" key="2">
    <citation type="journal article" date="2000" name="Science">
        <title>The genome sequence of Drosophila melanogaster.</title>
        <authorList>
            <person name="Adams M.D."/>
            <person name="Celniker S.E."/>
            <person name="Holt R.A."/>
            <person name="Evans C.A."/>
            <person name="Gocayne J.D."/>
            <person name="Amanatides P.G."/>
            <person name="Scherer S.E."/>
            <person name="Li P.W."/>
            <person name="Hoskins R.A."/>
            <person name="Galle R.F."/>
            <person name="George R.A."/>
            <person name="Lewis S.E."/>
            <person name="Richards S."/>
            <person name="Ashburner M."/>
            <person name="Henderson S.N."/>
            <person name="Sutton G.G."/>
            <person name="Wortman J.R."/>
            <person name="Yandell M.D."/>
            <person name="Zhang Q."/>
            <person name="Chen L.X."/>
            <person name="Brandon R.C."/>
            <person name="Rogers Y.-H.C."/>
            <person name="Blazej R.G."/>
            <person name="Champe M."/>
            <person name="Pfeiffer B.D."/>
            <person name="Wan K.H."/>
            <person name="Doyle C."/>
            <person name="Baxter E.G."/>
            <person name="Helt G."/>
            <person name="Nelson C.R."/>
            <person name="Miklos G.L.G."/>
            <person name="Abril J.F."/>
            <person name="Agbayani A."/>
            <person name="An H.-J."/>
            <person name="Andrews-Pfannkoch C."/>
            <person name="Baldwin D."/>
            <person name="Ballew R.M."/>
            <person name="Basu A."/>
            <person name="Baxendale J."/>
            <person name="Bayraktaroglu L."/>
            <person name="Beasley E.M."/>
            <person name="Beeson K.Y."/>
            <person name="Benos P.V."/>
            <person name="Berman B.P."/>
            <person name="Bhandari D."/>
            <person name="Bolshakov S."/>
            <person name="Borkova D."/>
            <person name="Botchan M.R."/>
            <person name="Bouck J."/>
            <person name="Brokstein P."/>
            <person name="Brottier P."/>
            <person name="Burtis K.C."/>
            <person name="Busam D.A."/>
            <person name="Butler H."/>
            <person name="Cadieu E."/>
            <person name="Center A."/>
            <person name="Chandra I."/>
            <person name="Cherry J.M."/>
            <person name="Cawley S."/>
            <person name="Dahlke C."/>
            <person name="Davenport L.B."/>
            <person name="Davies P."/>
            <person name="de Pablos B."/>
            <person name="Delcher A."/>
            <person name="Deng Z."/>
            <person name="Mays A.D."/>
            <person name="Dew I."/>
            <person name="Dietz S.M."/>
            <person name="Dodson K."/>
            <person name="Doup L.E."/>
            <person name="Downes M."/>
            <person name="Dugan-Rocha S."/>
            <person name="Dunkov B.C."/>
            <person name="Dunn P."/>
            <person name="Durbin K.J."/>
            <person name="Evangelista C.C."/>
            <person name="Ferraz C."/>
            <person name="Ferriera S."/>
            <person name="Fleischmann W."/>
            <person name="Fosler C."/>
            <person name="Gabrielian A.E."/>
            <person name="Garg N.S."/>
            <person name="Gelbart W.M."/>
            <person name="Glasser K."/>
            <person name="Glodek A."/>
            <person name="Gong F."/>
            <person name="Gorrell J.H."/>
            <person name="Gu Z."/>
            <person name="Guan P."/>
            <person name="Harris M."/>
            <person name="Harris N.L."/>
            <person name="Harvey D.A."/>
            <person name="Heiman T.J."/>
            <person name="Hernandez J.R."/>
            <person name="Houck J."/>
            <person name="Hostin D."/>
            <person name="Houston K.A."/>
            <person name="Howland T.J."/>
            <person name="Wei M.-H."/>
            <person name="Ibegwam C."/>
            <person name="Jalali M."/>
            <person name="Kalush F."/>
            <person name="Karpen G.H."/>
            <person name="Ke Z."/>
            <person name="Kennison J.A."/>
            <person name="Ketchum K.A."/>
            <person name="Kimmel B.E."/>
            <person name="Kodira C.D."/>
            <person name="Kraft C.L."/>
            <person name="Kravitz S."/>
            <person name="Kulp D."/>
            <person name="Lai Z."/>
            <person name="Lasko P."/>
            <person name="Lei Y."/>
            <person name="Levitsky A.A."/>
            <person name="Li J.H."/>
            <person name="Li Z."/>
            <person name="Liang Y."/>
            <person name="Lin X."/>
            <person name="Liu X."/>
            <person name="Mattei B."/>
            <person name="McIntosh T.C."/>
            <person name="McLeod M.P."/>
            <person name="McPherson D."/>
            <person name="Merkulov G."/>
            <person name="Milshina N.V."/>
            <person name="Mobarry C."/>
            <person name="Morris J."/>
            <person name="Moshrefi A."/>
            <person name="Mount S.M."/>
            <person name="Moy M."/>
            <person name="Murphy B."/>
            <person name="Murphy L."/>
            <person name="Muzny D.M."/>
            <person name="Nelson D.L."/>
            <person name="Nelson D.R."/>
            <person name="Nelson K.A."/>
            <person name="Nixon K."/>
            <person name="Nusskern D.R."/>
            <person name="Pacleb J.M."/>
            <person name="Palazzolo M."/>
            <person name="Pittman G.S."/>
            <person name="Pan S."/>
            <person name="Pollard J."/>
            <person name="Puri V."/>
            <person name="Reese M.G."/>
            <person name="Reinert K."/>
            <person name="Remington K."/>
            <person name="Saunders R.D.C."/>
            <person name="Scheeler F."/>
            <person name="Shen H."/>
            <person name="Shue B.C."/>
            <person name="Siden-Kiamos I."/>
            <person name="Simpson M."/>
            <person name="Skupski M.P."/>
            <person name="Smith T.J."/>
            <person name="Spier E."/>
            <person name="Spradling A.C."/>
            <person name="Stapleton M."/>
            <person name="Strong R."/>
            <person name="Sun E."/>
            <person name="Svirskas R."/>
            <person name="Tector C."/>
            <person name="Turner R."/>
            <person name="Venter E."/>
            <person name="Wang A.H."/>
            <person name="Wang X."/>
            <person name="Wang Z.-Y."/>
            <person name="Wassarman D.A."/>
            <person name="Weinstock G.M."/>
            <person name="Weissenbach J."/>
            <person name="Williams S.M."/>
            <person name="Woodage T."/>
            <person name="Worley K.C."/>
            <person name="Wu D."/>
            <person name="Yang S."/>
            <person name="Yao Q.A."/>
            <person name="Ye J."/>
            <person name="Yeh R.-F."/>
            <person name="Zaveri J.S."/>
            <person name="Zhan M."/>
            <person name="Zhang G."/>
            <person name="Zhao Q."/>
            <person name="Zheng L."/>
            <person name="Zheng X.H."/>
            <person name="Zhong F.N."/>
            <person name="Zhong W."/>
            <person name="Zhou X."/>
            <person name="Zhu S.C."/>
            <person name="Zhu X."/>
            <person name="Smith H.O."/>
            <person name="Gibbs R.A."/>
            <person name="Myers E.W."/>
            <person name="Rubin G.M."/>
            <person name="Venter J.C."/>
        </authorList>
    </citation>
    <scope>NUCLEOTIDE SEQUENCE [LARGE SCALE GENOMIC DNA]</scope>
    <source>
        <strain>Berkeley</strain>
    </source>
</reference>
<reference evidence="3 5" key="3">
    <citation type="journal article" date="2002" name="Genome Biol.">
        <title>Annotation of the Drosophila melanogaster euchromatic genome: a systematic review.</title>
        <authorList>
            <person name="Misra S."/>
            <person name="Crosby M.A."/>
            <person name="Mungall C.J."/>
            <person name="Matthews B.B."/>
            <person name="Campbell K.S."/>
            <person name="Hradecky P."/>
            <person name="Huang Y."/>
            <person name="Kaminker J.S."/>
            <person name="Millburn G.H."/>
            <person name="Prochnik S.E."/>
            <person name="Smith C.D."/>
            <person name="Tupy J.L."/>
            <person name="Whitfield E.J."/>
            <person name="Bayraktaroglu L."/>
            <person name="Berman B.P."/>
            <person name="Bettencourt B.R."/>
            <person name="Celniker S.E."/>
            <person name="de Grey A.D.N.J."/>
            <person name="Drysdale R.A."/>
            <person name="Harris N.L."/>
            <person name="Richter J."/>
            <person name="Russo S."/>
            <person name="Schroeder A.J."/>
            <person name="Shu S.Q."/>
            <person name="Stapleton M."/>
            <person name="Yamada C."/>
            <person name="Ashburner M."/>
            <person name="Gelbart W.M."/>
            <person name="Rubin G.M."/>
            <person name="Lewis S.E."/>
        </authorList>
    </citation>
    <scope>GENOME REANNOTATION</scope>
    <source>
        <strain>Berkeley</strain>
    </source>
</reference>
<evidence type="ECO:0000255" key="1"/>
<evidence type="ECO:0000269" key="2">
    <source>
    </source>
</evidence>
<evidence type="ECO:0000305" key="3"/>
<evidence type="ECO:0000312" key="4">
    <source>
        <dbReference type="EMBL" id="AAK64527.1"/>
    </source>
</evidence>
<evidence type="ECO:0000312" key="5">
    <source>
        <dbReference type="EMBL" id="AAN13842.1"/>
    </source>
</evidence>
<proteinExistence type="evidence at transcript level"/>
<name>TOTZ_DROME</name>
<feature type="signal peptide" evidence="1">
    <location>
        <begin position="1"/>
        <end position="23"/>
    </location>
</feature>
<feature type="chain" id="PRO_0000355006" description="Protein Turandot Z">
    <location>
        <begin position="24"/>
        <end position="147"/>
    </location>
</feature>
<feature type="sequence conflict" description="In Ref. 1; AAK64527." evidence="3" ref="1">
    <original>I</original>
    <variation>F</variation>
    <location>
        <position position="15"/>
    </location>
</feature>
<feature type="sequence conflict" description="In Ref. 1; AAK64527." evidence="3" ref="1">
    <original>G</original>
    <variation>E</variation>
    <location>
        <position position="19"/>
    </location>
</feature>
<protein>
    <recommendedName>
        <fullName>Protein Turandot Z</fullName>
    </recommendedName>
</protein>
<gene>
    <name evidence="5" type="primary">TotZ</name>
    <name type="ORF">CG31507</name>
</gene>